<gene>
    <name evidence="1" type="primary">thrS</name>
    <name type="ordered locus">E2348C_1848</name>
</gene>
<proteinExistence type="inferred from homology"/>
<evidence type="ECO:0000255" key="1">
    <source>
        <dbReference type="HAMAP-Rule" id="MF_00184"/>
    </source>
</evidence>
<evidence type="ECO:0000255" key="2">
    <source>
        <dbReference type="PROSITE-ProRule" id="PRU01228"/>
    </source>
</evidence>
<feature type="chain" id="PRO_1000199546" description="Threonine--tRNA ligase">
    <location>
        <begin position="1"/>
        <end position="642"/>
    </location>
</feature>
<feature type="domain" description="TGS" evidence="2">
    <location>
        <begin position="1"/>
        <end position="61"/>
    </location>
</feature>
<feature type="region of interest" description="Catalytic" evidence="1">
    <location>
        <begin position="243"/>
        <end position="534"/>
    </location>
</feature>
<feature type="binding site" evidence="1">
    <location>
        <position position="334"/>
    </location>
    <ligand>
        <name>Zn(2+)</name>
        <dbReference type="ChEBI" id="CHEBI:29105"/>
    </ligand>
</feature>
<feature type="binding site" evidence="1">
    <location>
        <position position="385"/>
    </location>
    <ligand>
        <name>Zn(2+)</name>
        <dbReference type="ChEBI" id="CHEBI:29105"/>
    </ligand>
</feature>
<feature type="binding site" evidence="1">
    <location>
        <position position="511"/>
    </location>
    <ligand>
        <name>Zn(2+)</name>
        <dbReference type="ChEBI" id="CHEBI:29105"/>
    </ligand>
</feature>
<feature type="modified residue" description="N6-acetyllysine" evidence="1">
    <location>
        <position position="286"/>
    </location>
</feature>
<organism>
    <name type="scientific">Escherichia coli O127:H6 (strain E2348/69 / EPEC)</name>
    <dbReference type="NCBI Taxonomy" id="574521"/>
    <lineage>
        <taxon>Bacteria</taxon>
        <taxon>Pseudomonadati</taxon>
        <taxon>Pseudomonadota</taxon>
        <taxon>Gammaproteobacteria</taxon>
        <taxon>Enterobacterales</taxon>
        <taxon>Enterobacteriaceae</taxon>
        <taxon>Escherichia</taxon>
    </lineage>
</organism>
<name>SYT_ECO27</name>
<dbReference type="EC" id="6.1.1.3" evidence="1"/>
<dbReference type="EMBL" id="FM180568">
    <property type="protein sequence ID" value="CAS09396.1"/>
    <property type="molecule type" value="Genomic_DNA"/>
</dbReference>
<dbReference type="RefSeq" id="WP_001144202.1">
    <property type="nucleotide sequence ID" value="NC_011601.1"/>
</dbReference>
<dbReference type="SMR" id="B7USA2"/>
<dbReference type="GeneID" id="93775932"/>
<dbReference type="KEGG" id="ecg:E2348C_1848"/>
<dbReference type="HOGENOM" id="CLU_008554_0_1_6"/>
<dbReference type="Proteomes" id="UP000008205">
    <property type="component" value="Chromosome"/>
</dbReference>
<dbReference type="GO" id="GO:0005829">
    <property type="term" value="C:cytosol"/>
    <property type="evidence" value="ECO:0007669"/>
    <property type="project" value="TreeGrafter"/>
</dbReference>
<dbReference type="GO" id="GO:0005524">
    <property type="term" value="F:ATP binding"/>
    <property type="evidence" value="ECO:0007669"/>
    <property type="project" value="UniProtKB-UniRule"/>
</dbReference>
<dbReference type="GO" id="GO:0046872">
    <property type="term" value="F:metal ion binding"/>
    <property type="evidence" value="ECO:0007669"/>
    <property type="project" value="UniProtKB-KW"/>
</dbReference>
<dbReference type="GO" id="GO:0004829">
    <property type="term" value="F:threonine-tRNA ligase activity"/>
    <property type="evidence" value="ECO:0007669"/>
    <property type="project" value="UniProtKB-UniRule"/>
</dbReference>
<dbReference type="GO" id="GO:0000049">
    <property type="term" value="F:tRNA binding"/>
    <property type="evidence" value="ECO:0007669"/>
    <property type="project" value="UniProtKB-KW"/>
</dbReference>
<dbReference type="GO" id="GO:0006435">
    <property type="term" value="P:threonyl-tRNA aminoacylation"/>
    <property type="evidence" value="ECO:0007669"/>
    <property type="project" value="UniProtKB-UniRule"/>
</dbReference>
<dbReference type="CDD" id="cd01667">
    <property type="entry name" value="TGS_ThrRS"/>
    <property type="match status" value="1"/>
</dbReference>
<dbReference type="CDD" id="cd00860">
    <property type="entry name" value="ThrRS_anticodon"/>
    <property type="match status" value="1"/>
</dbReference>
<dbReference type="CDD" id="cd00771">
    <property type="entry name" value="ThrRS_core"/>
    <property type="match status" value="1"/>
</dbReference>
<dbReference type="FunFam" id="3.10.20.30:FF:000005">
    <property type="entry name" value="Threonine--tRNA ligase"/>
    <property type="match status" value="1"/>
</dbReference>
<dbReference type="FunFam" id="3.30.54.20:FF:000002">
    <property type="entry name" value="Threonine--tRNA ligase"/>
    <property type="match status" value="1"/>
</dbReference>
<dbReference type="FunFam" id="3.30.930.10:FF:000002">
    <property type="entry name" value="Threonine--tRNA ligase"/>
    <property type="match status" value="1"/>
</dbReference>
<dbReference type="FunFam" id="3.40.50.800:FF:000001">
    <property type="entry name" value="Threonine--tRNA ligase"/>
    <property type="match status" value="1"/>
</dbReference>
<dbReference type="FunFam" id="3.30.980.10:FF:000005">
    <property type="entry name" value="Threonyl-tRNA synthetase, mitochondrial"/>
    <property type="match status" value="1"/>
</dbReference>
<dbReference type="Gene3D" id="3.10.20.30">
    <property type="match status" value="1"/>
</dbReference>
<dbReference type="Gene3D" id="3.30.54.20">
    <property type="match status" value="1"/>
</dbReference>
<dbReference type="Gene3D" id="3.40.50.800">
    <property type="entry name" value="Anticodon-binding domain"/>
    <property type="match status" value="1"/>
</dbReference>
<dbReference type="Gene3D" id="3.30.930.10">
    <property type="entry name" value="Bira Bifunctional Protein, Domain 2"/>
    <property type="match status" value="1"/>
</dbReference>
<dbReference type="Gene3D" id="3.30.980.10">
    <property type="entry name" value="Threonyl-trna Synthetase, Chain A, domain 2"/>
    <property type="match status" value="1"/>
</dbReference>
<dbReference type="HAMAP" id="MF_00184">
    <property type="entry name" value="Thr_tRNA_synth"/>
    <property type="match status" value="1"/>
</dbReference>
<dbReference type="InterPro" id="IPR002314">
    <property type="entry name" value="aa-tRNA-synt_IIb"/>
</dbReference>
<dbReference type="InterPro" id="IPR006195">
    <property type="entry name" value="aa-tRNA-synth_II"/>
</dbReference>
<dbReference type="InterPro" id="IPR045864">
    <property type="entry name" value="aa-tRNA-synth_II/BPL/LPL"/>
</dbReference>
<dbReference type="InterPro" id="IPR004154">
    <property type="entry name" value="Anticodon-bd"/>
</dbReference>
<dbReference type="InterPro" id="IPR036621">
    <property type="entry name" value="Anticodon-bd_dom_sf"/>
</dbReference>
<dbReference type="InterPro" id="IPR012675">
    <property type="entry name" value="Beta-grasp_dom_sf"/>
</dbReference>
<dbReference type="InterPro" id="IPR004095">
    <property type="entry name" value="TGS"/>
</dbReference>
<dbReference type="InterPro" id="IPR012676">
    <property type="entry name" value="TGS-like"/>
</dbReference>
<dbReference type="InterPro" id="IPR002320">
    <property type="entry name" value="Thr-tRNA-ligase_IIa"/>
</dbReference>
<dbReference type="InterPro" id="IPR018163">
    <property type="entry name" value="Thr/Ala-tRNA-synth_IIc_edit"/>
</dbReference>
<dbReference type="InterPro" id="IPR047246">
    <property type="entry name" value="ThrRS_anticodon"/>
</dbReference>
<dbReference type="InterPro" id="IPR033728">
    <property type="entry name" value="ThrRS_core"/>
</dbReference>
<dbReference type="InterPro" id="IPR012947">
    <property type="entry name" value="tRNA_SAD"/>
</dbReference>
<dbReference type="NCBIfam" id="TIGR00418">
    <property type="entry name" value="thrS"/>
    <property type="match status" value="1"/>
</dbReference>
<dbReference type="PANTHER" id="PTHR11451:SF44">
    <property type="entry name" value="THREONINE--TRNA LIGASE, CHLOROPLASTIC_MITOCHONDRIAL 2"/>
    <property type="match status" value="1"/>
</dbReference>
<dbReference type="PANTHER" id="PTHR11451">
    <property type="entry name" value="THREONINE-TRNA LIGASE"/>
    <property type="match status" value="1"/>
</dbReference>
<dbReference type="Pfam" id="PF03129">
    <property type="entry name" value="HGTP_anticodon"/>
    <property type="match status" value="1"/>
</dbReference>
<dbReference type="Pfam" id="PF02824">
    <property type="entry name" value="TGS"/>
    <property type="match status" value="1"/>
</dbReference>
<dbReference type="Pfam" id="PF00587">
    <property type="entry name" value="tRNA-synt_2b"/>
    <property type="match status" value="1"/>
</dbReference>
<dbReference type="Pfam" id="PF07973">
    <property type="entry name" value="tRNA_SAD"/>
    <property type="match status" value="1"/>
</dbReference>
<dbReference type="PRINTS" id="PR01047">
    <property type="entry name" value="TRNASYNTHTHR"/>
</dbReference>
<dbReference type="SMART" id="SM00863">
    <property type="entry name" value="tRNA_SAD"/>
    <property type="match status" value="1"/>
</dbReference>
<dbReference type="SUPFAM" id="SSF52954">
    <property type="entry name" value="Class II aaRS ABD-related"/>
    <property type="match status" value="1"/>
</dbReference>
<dbReference type="SUPFAM" id="SSF55681">
    <property type="entry name" value="Class II aaRS and biotin synthetases"/>
    <property type="match status" value="1"/>
</dbReference>
<dbReference type="SUPFAM" id="SSF81271">
    <property type="entry name" value="TGS-like"/>
    <property type="match status" value="1"/>
</dbReference>
<dbReference type="SUPFAM" id="SSF55186">
    <property type="entry name" value="ThrRS/AlaRS common domain"/>
    <property type="match status" value="1"/>
</dbReference>
<dbReference type="PROSITE" id="PS50862">
    <property type="entry name" value="AA_TRNA_LIGASE_II"/>
    <property type="match status" value="1"/>
</dbReference>
<dbReference type="PROSITE" id="PS51880">
    <property type="entry name" value="TGS"/>
    <property type="match status" value="1"/>
</dbReference>
<sequence length="642" mass="74014">MPVITLPDGSQRHYDHAVSPMDVALDIGPGLAKACIAGRVNGELVDACDLIENDAQLSIITAKDEEGLEIIRHSCAHLLGHAIKQLWPHTKMAIGPVIDNGFYYDVDLDRTLTQEDVEALEKRMHELAEKNYDVIKKKVSWHEARETFANRGESYKVSILDENIAHDDKPGLYFHEEYVDMCRGPHVPNMRFCHHFKLMKTAGAYWRGDSNNKMLQRIYGTAWADKKALNAYLQRLEEAAKRDHRKIGKQLDLYHMQEEAPGMVFWHNDGWTIFRELEVFVRSKLKEYQYQEVKGPFMMDRVLWEKTGHWDNYKDAMFTTSSENREYCIKPMNCPGHVQIFNQGLKSYRDLPLRMAEFGSCHRNEPSGSLHGLMRVRGFTQDDAHIFCTEEQIRDEVNGCIRLVYDMYSTFGFEKIVVKLSTRPEKRIGSDEMWDRAEADLAVALEENNIPFEYQLGEGAFYGPKIEFTLYDCLDRAWQCGTVQLDFSLPSRLSASYVGEDNERKVPVMIHRAILGSMERFIGILTEEFAGFFPTWLAPVQVVIMNITDSQSEYVNELTQKLSNAGIRVKADLRNEKIGFKIREHTLRRVPYMLVCGDKEVESGKVAVRTRRGKDLGSMDVNEVIEKLQQEIRSRSLKQLEE</sequence>
<reference key="1">
    <citation type="journal article" date="2009" name="J. Bacteriol.">
        <title>Complete genome sequence and comparative genome analysis of enteropathogenic Escherichia coli O127:H6 strain E2348/69.</title>
        <authorList>
            <person name="Iguchi A."/>
            <person name="Thomson N.R."/>
            <person name="Ogura Y."/>
            <person name="Saunders D."/>
            <person name="Ooka T."/>
            <person name="Henderson I.R."/>
            <person name="Harris D."/>
            <person name="Asadulghani M."/>
            <person name="Kurokawa K."/>
            <person name="Dean P."/>
            <person name="Kenny B."/>
            <person name="Quail M.A."/>
            <person name="Thurston S."/>
            <person name="Dougan G."/>
            <person name="Hayashi T."/>
            <person name="Parkhill J."/>
            <person name="Frankel G."/>
        </authorList>
    </citation>
    <scope>NUCLEOTIDE SEQUENCE [LARGE SCALE GENOMIC DNA]</scope>
    <source>
        <strain>E2348/69 / EPEC</strain>
    </source>
</reference>
<accession>B7USA2</accession>
<protein>
    <recommendedName>
        <fullName evidence="1">Threonine--tRNA ligase</fullName>
        <ecNumber evidence="1">6.1.1.3</ecNumber>
    </recommendedName>
    <alternativeName>
        <fullName evidence="1">Threonyl-tRNA synthetase</fullName>
        <shortName evidence="1">ThrRS</shortName>
    </alternativeName>
</protein>
<keyword id="KW-0007">Acetylation</keyword>
<keyword id="KW-0030">Aminoacyl-tRNA synthetase</keyword>
<keyword id="KW-0067">ATP-binding</keyword>
<keyword id="KW-0963">Cytoplasm</keyword>
<keyword id="KW-0436">Ligase</keyword>
<keyword id="KW-0479">Metal-binding</keyword>
<keyword id="KW-0547">Nucleotide-binding</keyword>
<keyword id="KW-0648">Protein biosynthesis</keyword>
<keyword id="KW-1185">Reference proteome</keyword>
<keyword id="KW-0694">RNA-binding</keyword>
<keyword id="KW-0820">tRNA-binding</keyword>
<keyword id="KW-0862">Zinc</keyword>
<comment type="function">
    <text evidence="1">Catalyzes the attachment of threonine to tRNA(Thr) in a two-step reaction: L-threonine is first activated by ATP to form Thr-AMP and then transferred to the acceptor end of tRNA(Thr). Also edits incorrectly charged L-seryl-tRNA(Thr).</text>
</comment>
<comment type="catalytic activity">
    <reaction evidence="1">
        <text>tRNA(Thr) + L-threonine + ATP = L-threonyl-tRNA(Thr) + AMP + diphosphate + H(+)</text>
        <dbReference type="Rhea" id="RHEA:24624"/>
        <dbReference type="Rhea" id="RHEA-COMP:9670"/>
        <dbReference type="Rhea" id="RHEA-COMP:9704"/>
        <dbReference type="ChEBI" id="CHEBI:15378"/>
        <dbReference type="ChEBI" id="CHEBI:30616"/>
        <dbReference type="ChEBI" id="CHEBI:33019"/>
        <dbReference type="ChEBI" id="CHEBI:57926"/>
        <dbReference type="ChEBI" id="CHEBI:78442"/>
        <dbReference type="ChEBI" id="CHEBI:78534"/>
        <dbReference type="ChEBI" id="CHEBI:456215"/>
        <dbReference type="EC" id="6.1.1.3"/>
    </reaction>
</comment>
<comment type="cofactor">
    <cofactor evidence="1">
        <name>Zn(2+)</name>
        <dbReference type="ChEBI" id="CHEBI:29105"/>
    </cofactor>
    <text evidence="1">Binds 1 zinc ion per subunit.</text>
</comment>
<comment type="subunit">
    <text evidence="1">Homodimer.</text>
</comment>
<comment type="subcellular location">
    <subcellularLocation>
        <location evidence="1">Cytoplasm</location>
    </subcellularLocation>
</comment>
<comment type="similarity">
    <text evidence="1">Belongs to the class-II aminoacyl-tRNA synthetase family.</text>
</comment>